<evidence type="ECO:0000250" key="1">
    <source>
        <dbReference type="UniProtKB" id="Q3SYS1"/>
    </source>
</evidence>
<evidence type="ECO:0000269" key="2">
    <source>
    </source>
</evidence>
<evidence type="ECO:0000269" key="3">
    <source>
    </source>
</evidence>
<evidence type="ECO:0000269" key="4">
    <source>
    </source>
</evidence>
<evidence type="ECO:0000269" key="5">
    <source>
    </source>
</evidence>
<evidence type="ECO:0000303" key="6">
    <source>
    </source>
</evidence>
<evidence type="ECO:0000305" key="7"/>
<evidence type="ECO:0007744" key="8">
    <source>
        <dbReference type="PDB" id="3J7Y"/>
    </source>
</evidence>
<evidence type="ECO:0007744" key="9">
    <source>
        <dbReference type="PDB" id="3J9M"/>
    </source>
</evidence>
<evidence type="ECO:0007744" key="10">
    <source>
        <dbReference type="PDB" id="5OOL"/>
    </source>
</evidence>
<evidence type="ECO:0007744" key="11">
    <source>
        <dbReference type="PDB" id="5OOM"/>
    </source>
</evidence>
<evidence type="ECO:0007744" key="12">
    <source>
        <dbReference type="PDB" id="7QH6"/>
    </source>
</evidence>
<evidence type="ECO:0007744" key="13">
    <source>
        <dbReference type="PDB" id="7QH7"/>
    </source>
</evidence>
<evidence type="ECO:0007744" key="14">
    <source>
    </source>
</evidence>
<evidence type="ECO:0007829" key="15">
    <source>
        <dbReference type="PDB" id="7OF0"/>
    </source>
</evidence>
<evidence type="ECO:0007829" key="16">
    <source>
        <dbReference type="PDB" id="7QH7"/>
    </source>
</evidence>
<evidence type="ECO:0007829" key="17">
    <source>
        <dbReference type="PDB" id="8QU5"/>
    </source>
</evidence>
<keyword id="KW-0002">3D-structure</keyword>
<keyword id="KW-0007">Acetylation</keyword>
<keyword id="KW-0496">Mitochondrion</keyword>
<keyword id="KW-1267">Proteomics identification</keyword>
<keyword id="KW-1185">Reference proteome</keyword>
<keyword id="KW-0687">Ribonucleoprotein</keyword>
<keyword id="KW-0689">Ribosomal protein</keyword>
<dbReference type="EMBL" id="AB049640">
    <property type="protein sequence ID" value="BAB40845.1"/>
    <property type="molecule type" value="mRNA"/>
</dbReference>
<dbReference type="EMBL" id="AF112214">
    <property type="protein sequence ID" value="AAF17202.1"/>
    <property type="status" value="ALT_FRAME"/>
    <property type="molecule type" value="mRNA"/>
</dbReference>
<dbReference type="EMBL" id="AK311924">
    <property type="protein sequence ID" value="BAG34865.1"/>
    <property type="molecule type" value="mRNA"/>
</dbReference>
<dbReference type="EMBL" id="CH471060">
    <property type="protein sequence ID" value="EAW92004.1"/>
    <property type="molecule type" value="Genomic_DNA"/>
</dbReference>
<dbReference type="EMBL" id="BC009190">
    <property type="protein sequence ID" value="AAH09190.1"/>
    <property type="molecule type" value="mRNA"/>
</dbReference>
<dbReference type="EMBL" id="BC021744">
    <property type="protein sequence ID" value="AAH21744.1"/>
    <property type="molecule type" value="mRNA"/>
</dbReference>
<dbReference type="CCDS" id="CCDS6332.1"/>
<dbReference type="RefSeq" id="NP_054797.2">
    <property type="nucleotide sequence ID" value="NM_014078.5"/>
</dbReference>
<dbReference type="PDB" id="3J7Y">
    <property type="method" value="EM"/>
    <property type="resolution" value="3.40 A"/>
    <property type="chains" value="K=1-178"/>
</dbReference>
<dbReference type="PDB" id="3J9M">
    <property type="method" value="EM"/>
    <property type="resolution" value="3.50 A"/>
    <property type="chains" value="K=1-178"/>
</dbReference>
<dbReference type="PDB" id="5OOL">
    <property type="method" value="EM"/>
    <property type="resolution" value="3.06 A"/>
    <property type="chains" value="K=1-178"/>
</dbReference>
<dbReference type="PDB" id="5OOM">
    <property type="method" value="EM"/>
    <property type="resolution" value="3.03 A"/>
    <property type="chains" value="K=1-178"/>
</dbReference>
<dbReference type="PDB" id="6I9R">
    <property type="method" value="EM"/>
    <property type="resolution" value="3.90 A"/>
    <property type="chains" value="K=1-178"/>
</dbReference>
<dbReference type="PDB" id="6NU2">
    <property type="method" value="EM"/>
    <property type="resolution" value="3.90 A"/>
    <property type="chains" value="K=2-178"/>
</dbReference>
<dbReference type="PDB" id="6NU3">
    <property type="method" value="EM"/>
    <property type="resolution" value="4.40 A"/>
    <property type="chains" value="K=1-178"/>
</dbReference>
<dbReference type="PDB" id="6VLZ">
    <property type="method" value="EM"/>
    <property type="resolution" value="2.97 A"/>
    <property type="chains" value="K=1-178"/>
</dbReference>
<dbReference type="PDB" id="6VMI">
    <property type="method" value="EM"/>
    <property type="resolution" value="2.96 A"/>
    <property type="chains" value="K=1-178"/>
</dbReference>
<dbReference type="PDB" id="6ZM5">
    <property type="method" value="EM"/>
    <property type="resolution" value="2.89 A"/>
    <property type="chains" value="K=2-178"/>
</dbReference>
<dbReference type="PDB" id="6ZM6">
    <property type="method" value="EM"/>
    <property type="resolution" value="2.59 A"/>
    <property type="chains" value="K=2-178"/>
</dbReference>
<dbReference type="PDB" id="6ZS9">
    <property type="method" value="EM"/>
    <property type="resolution" value="4.00 A"/>
    <property type="chains" value="XK=1-178"/>
</dbReference>
<dbReference type="PDB" id="6ZSA">
    <property type="method" value="EM"/>
    <property type="resolution" value="4.00 A"/>
    <property type="chains" value="XK=1-178"/>
</dbReference>
<dbReference type="PDB" id="6ZSB">
    <property type="method" value="EM"/>
    <property type="resolution" value="4.50 A"/>
    <property type="chains" value="XK=1-178"/>
</dbReference>
<dbReference type="PDB" id="6ZSC">
    <property type="method" value="EM"/>
    <property type="resolution" value="3.50 A"/>
    <property type="chains" value="XK=1-178"/>
</dbReference>
<dbReference type="PDB" id="6ZSD">
    <property type="method" value="EM"/>
    <property type="resolution" value="3.70 A"/>
    <property type="chains" value="XK=1-178"/>
</dbReference>
<dbReference type="PDB" id="6ZSE">
    <property type="method" value="EM"/>
    <property type="resolution" value="5.00 A"/>
    <property type="chains" value="XK=1-178"/>
</dbReference>
<dbReference type="PDB" id="6ZSG">
    <property type="method" value="EM"/>
    <property type="resolution" value="4.00 A"/>
    <property type="chains" value="XK=1-178"/>
</dbReference>
<dbReference type="PDB" id="7A5F">
    <property type="method" value="EM"/>
    <property type="resolution" value="4.40 A"/>
    <property type="chains" value="K3=1-178"/>
</dbReference>
<dbReference type="PDB" id="7A5G">
    <property type="method" value="EM"/>
    <property type="resolution" value="4.33 A"/>
    <property type="chains" value="K3=1-178"/>
</dbReference>
<dbReference type="PDB" id="7A5H">
    <property type="method" value="EM"/>
    <property type="resolution" value="3.30 A"/>
    <property type="chains" value="K=1-178"/>
</dbReference>
<dbReference type="PDB" id="7A5I">
    <property type="method" value="EM"/>
    <property type="resolution" value="3.70 A"/>
    <property type="chains" value="K3=1-178"/>
</dbReference>
<dbReference type="PDB" id="7A5J">
    <property type="method" value="EM"/>
    <property type="resolution" value="3.10 A"/>
    <property type="chains" value="K=1-178"/>
</dbReference>
<dbReference type="PDB" id="7A5K">
    <property type="method" value="EM"/>
    <property type="resolution" value="3.70 A"/>
    <property type="chains" value="K3=1-178"/>
</dbReference>
<dbReference type="PDB" id="7L08">
    <property type="method" value="EM"/>
    <property type="resolution" value="3.49 A"/>
    <property type="chains" value="K=1-178"/>
</dbReference>
<dbReference type="PDB" id="7L20">
    <property type="method" value="EM"/>
    <property type="resolution" value="3.15 A"/>
    <property type="chains" value="K=1-178"/>
</dbReference>
<dbReference type="PDB" id="7O9K">
    <property type="method" value="EM"/>
    <property type="resolution" value="3.10 A"/>
    <property type="chains" value="K=1-178"/>
</dbReference>
<dbReference type="PDB" id="7O9M">
    <property type="method" value="EM"/>
    <property type="resolution" value="2.50 A"/>
    <property type="chains" value="K=1-178"/>
</dbReference>
<dbReference type="PDB" id="7ODR">
    <property type="method" value="EM"/>
    <property type="resolution" value="2.90 A"/>
    <property type="chains" value="K=1-178"/>
</dbReference>
<dbReference type="PDB" id="7ODS">
    <property type="method" value="EM"/>
    <property type="resolution" value="3.10 A"/>
    <property type="chains" value="K=1-178"/>
</dbReference>
<dbReference type="PDB" id="7ODT">
    <property type="method" value="EM"/>
    <property type="resolution" value="3.10 A"/>
    <property type="chains" value="K=1-178"/>
</dbReference>
<dbReference type="PDB" id="7OF0">
    <property type="method" value="EM"/>
    <property type="resolution" value="2.20 A"/>
    <property type="chains" value="K=1-178"/>
</dbReference>
<dbReference type="PDB" id="7OF2">
    <property type="method" value="EM"/>
    <property type="resolution" value="2.70 A"/>
    <property type="chains" value="K=1-178"/>
</dbReference>
<dbReference type="PDB" id="7OF3">
    <property type="method" value="EM"/>
    <property type="resolution" value="2.70 A"/>
    <property type="chains" value="K=1-178"/>
</dbReference>
<dbReference type="PDB" id="7OF4">
    <property type="method" value="EM"/>
    <property type="resolution" value="2.70 A"/>
    <property type="chains" value="K=1-178"/>
</dbReference>
<dbReference type="PDB" id="7OF5">
    <property type="method" value="EM"/>
    <property type="resolution" value="2.90 A"/>
    <property type="chains" value="K=1-178"/>
</dbReference>
<dbReference type="PDB" id="7OF6">
    <property type="method" value="EM"/>
    <property type="resolution" value="2.60 A"/>
    <property type="chains" value="K=1-178"/>
</dbReference>
<dbReference type="PDB" id="7OF7">
    <property type="method" value="EM"/>
    <property type="resolution" value="2.50 A"/>
    <property type="chains" value="K=1-178"/>
</dbReference>
<dbReference type="PDB" id="7OG4">
    <property type="method" value="EM"/>
    <property type="resolution" value="3.80 A"/>
    <property type="chains" value="XK=1-178"/>
</dbReference>
<dbReference type="PDB" id="7OI6">
    <property type="method" value="EM"/>
    <property type="resolution" value="5.70 A"/>
    <property type="chains" value="K=1-178"/>
</dbReference>
<dbReference type="PDB" id="7OI7">
    <property type="method" value="EM"/>
    <property type="resolution" value="3.50 A"/>
    <property type="chains" value="K=1-178"/>
</dbReference>
<dbReference type="PDB" id="7OI8">
    <property type="method" value="EM"/>
    <property type="resolution" value="3.50 A"/>
    <property type="chains" value="K=1-178"/>
</dbReference>
<dbReference type="PDB" id="7OI9">
    <property type="method" value="EM"/>
    <property type="resolution" value="3.30 A"/>
    <property type="chains" value="K=1-178"/>
</dbReference>
<dbReference type="PDB" id="7OIA">
    <property type="method" value="EM"/>
    <property type="resolution" value="3.20 A"/>
    <property type="chains" value="K=1-178"/>
</dbReference>
<dbReference type="PDB" id="7OIB">
    <property type="method" value="EM"/>
    <property type="resolution" value="3.30 A"/>
    <property type="chains" value="K=1-178"/>
</dbReference>
<dbReference type="PDB" id="7OIC">
    <property type="method" value="EM"/>
    <property type="resolution" value="3.10 A"/>
    <property type="chains" value="K=1-178"/>
</dbReference>
<dbReference type="PDB" id="7OID">
    <property type="method" value="EM"/>
    <property type="resolution" value="3.70 A"/>
    <property type="chains" value="K=1-178"/>
</dbReference>
<dbReference type="PDB" id="7OIE">
    <property type="method" value="EM"/>
    <property type="resolution" value="3.50 A"/>
    <property type="chains" value="K=1-178"/>
</dbReference>
<dbReference type="PDB" id="7PD3">
    <property type="method" value="EM"/>
    <property type="resolution" value="3.40 A"/>
    <property type="chains" value="K=1-178"/>
</dbReference>
<dbReference type="PDB" id="7PO4">
    <property type="method" value="EM"/>
    <property type="resolution" value="2.56 A"/>
    <property type="chains" value="K=2-178"/>
</dbReference>
<dbReference type="PDB" id="7QH6">
    <property type="method" value="EM"/>
    <property type="resolution" value="3.08 A"/>
    <property type="chains" value="K=1-178"/>
</dbReference>
<dbReference type="PDB" id="7QH7">
    <property type="method" value="EM"/>
    <property type="resolution" value="2.89 A"/>
    <property type="chains" value="K=2-178"/>
</dbReference>
<dbReference type="PDB" id="7QI4">
    <property type="method" value="EM"/>
    <property type="resolution" value="2.21 A"/>
    <property type="chains" value="K=1-178"/>
</dbReference>
<dbReference type="PDB" id="7QI5">
    <property type="method" value="EM"/>
    <property type="resolution" value="2.63 A"/>
    <property type="chains" value="K=1-178"/>
</dbReference>
<dbReference type="PDB" id="7QI6">
    <property type="method" value="EM"/>
    <property type="resolution" value="2.98 A"/>
    <property type="chains" value="K=1-178"/>
</dbReference>
<dbReference type="PDB" id="8ANY">
    <property type="method" value="EM"/>
    <property type="resolution" value="2.85 A"/>
    <property type="chains" value="K=1-178"/>
</dbReference>
<dbReference type="PDB" id="8K2A">
    <property type="method" value="EM"/>
    <property type="resolution" value="2.90 A"/>
    <property type="chains" value="LM=1-178"/>
</dbReference>
<dbReference type="PDB" id="8K2B">
    <property type="method" value="EM"/>
    <property type="resolution" value="3.40 A"/>
    <property type="chains" value="LM=1-178"/>
</dbReference>
<dbReference type="PDB" id="8OIR">
    <property type="method" value="EM"/>
    <property type="resolution" value="3.10 A"/>
    <property type="chains" value="BR=1-178"/>
</dbReference>
<dbReference type="PDB" id="8OIT">
    <property type="method" value="EM"/>
    <property type="resolution" value="2.90 A"/>
    <property type="chains" value="BR=1-178"/>
</dbReference>
<dbReference type="PDB" id="8PK0">
    <property type="method" value="EM"/>
    <property type="resolution" value="3.03 A"/>
    <property type="chains" value="K=1-178"/>
</dbReference>
<dbReference type="PDB" id="8QSJ">
    <property type="method" value="EM"/>
    <property type="resolution" value="3.00 A"/>
    <property type="chains" value="K=1-178"/>
</dbReference>
<dbReference type="PDB" id="8QU1">
    <property type="method" value="EM"/>
    <property type="resolution" value="2.74 A"/>
    <property type="chains" value="K=1-178"/>
</dbReference>
<dbReference type="PDB" id="8QU5">
    <property type="method" value="EM"/>
    <property type="resolution" value="2.42 A"/>
    <property type="chains" value="K=1-178"/>
</dbReference>
<dbReference type="PDB" id="8RRI">
    <property type="method" value="EM"/>
    <property type="resolution" value="2.40 A"/>
    <property type="chains" value="K=2-178"/>
</dbReference>
<dbReference type="PDB" id="8XT0">
    <property type="method" value="EM"/>
    <property type="resolution" value="3.20 A"/>
    <property type="chains" value="LM=1-178"/>
</dbReference>
<dbReference type="PDB" id="8XT1">
    <property type="method" value="EM"/>
    <property type="resolution" value="3.10 A"/>
    <property type="chains" value="LM=1-178"/>
</dbReference>
<dbReference type="PDB" id="8XT2">
    <property type="method" value="EM"/>
    <property type="resolution" value="3.30 A"/>
    <property type="chains" value="LM=1-178"/>
</dbReference>
<dbReference type="PDB" id="8XT3">
    <property type="method" value="EM"/>
    <property type="resolution" value="3.10 A"/>
    <property type="chains" value="LM=1-178"/>
</dbReference>
<dbReference type="PDBsum" id="3J7Y"/>
<dbReference type="PDBsum" id="3J9M"/>
<dbReference type="PDBsum" id="5OOL"/>
<dbReference type="PDBsum" id="5OOM"/>
<dbReference type="PDBsum" id="6I9R"/>
<dbReference type="PDBsum" id="6NU2"/>
<dbReference type="PDBsum" id="6NU3"/>
<dbReference type="PDBsum" id="6VLZ"/>
<dbReference type="PDBsum" id="6VMI"/>
<dbReference type="PDBsum" id="6ZM5"/>
<dbReference type="PDBsum" id="6ZM6"/>
<dbReference type="PDBsum" id="6ZS9"/>
<dbReference type="PDBsum" id="6ZSA"/>
<dbReference type="PDBsum" id="6ZSB"/>
<dbReference type="PDBsum" id="6ZSC"/>
<dbReference type="PDBsum" id="6ZSD"/>
<dbReference type="PDBsum" id="6ZSE"/>
<dbReference type="PDBsum" id="6ZSG"/>
<dbReference type="PDBsum" id="7A5F"/>
<dbReference type="PDBsum" id="7A5G"/>
<dbReference type="PDBsum" id="7A5H"/>
<dbReference type="PDBsum" id="7A5I"/>
<dbReference type="PDBsum" id="7A5J"/>
<dbReference type="PDBsum" id="7A5K"/>
<dbReference type="PDBsum" id="7L08"/>
<dbReference type="PDBsum" id="7L20"/>
<dbReference type="PDBsum" id="7O9K"/>
<dbReference type="PDBsum" id="7O9M"/>
<dbReference type="PDBsum" id="7ODR"/>
<dbReference type="PDBsum" id="7ODS"/>
<dbReference type="PDBsum" id="7ODT"/>
<dbReference type="PDBsum" id="7OF0"/>
<dbReference type="PDBsum" id="7OF2"/>
<dbReference type="PDBsum" id="7OF3"/>
<dbReference type="PDBsum" id="7OF4"/>
<dbReference type="PDBsum" id="7OF5"/>
<dbReference type="PDBsum" id="7OF6"/>
<dbReference type="PDBsum" id="7OF7"/>
<dbReference type="PDBsum" id="7OG4"/>
<dbReference type="PDBsum" id="7OI6"/>
<dbReference type="PDBsum" id="7OI7"/>
<dbReference type="PDBsum" id="7OI8"/>
<dbReference type="PDBsum" id="7OI9"/>
<dbReference type="PDBsum" id="7OIA"/>
<dbReference type="PDBsum" id="7OIB"/>
<dbReference type="PDBsum" id="7OIC"/>
<dbReference type="PDBsum" id="7OID"/>
<dbReference type="PDBsum" id="7OIE"/>
<dbReference type="PDBsum" id="7PD3"/>
<dbReference type="PDBsum" id="7PO4"/>
<dbReference type="PDBsum" id="7QH6"/>
<dbReference type="PDBsum" id="7QH7"/>
<dbReference type="PDBsum" id="7QI4"/>
<dbReference type="PDBsum" id="7QI5"/>
<dbReference type="PDBsum" id="7QI6"/>
<dbReference type="PDBsum" id="8ANY"/>
<dbReference type="PDBsum" id="8K2A"/>
<dbReference type="PDBsum" id="8K2B"/>
<dbReference type="PDBsum" id="8OIR"/>
<dbReference type="PDBsum" id="8OIT"/>
<dbReference type="PDBsum" id="8PK0"/>
<dbReference type="PDBsum" id="8QSJ"/>
<dbReference type="PDBsum" id="8QU1"/>
<dbReference type="PDBsum" id="8QU5"/>
<dbReference type="PDBsum" id="8RRI"/>
<dbReference type="PDBsum" id="8XT0"/>
<dbReference type="PDBsum" id="8XT1"/>
<dbReference type="PDBsum" id="8XT2"/>
<dbReference type="PDBsum" id="8XT3"/>
<dbReference type="EMDB" id="EMD-0514"/>
<dbReference type="EMDB" id="EMD-0515"/>
<dbReference type="EMDB" id="EMD-11278"/>
<dbReference type="EMDB" id="EMD-11279"/>
<dbReference type="EMDB" id="EMD-11390"/>
<dbReference type="EMDB" id="EMD-11391"/>
<dbReference type="EMDB" id="EMD-11392"/>
<dbReference type="EMDB" id="EMD-11393"/>
<dbReference type="EMDB" id="EMD-11394"/>
<dbReference type="EMDB" id="EMD-11395"/>
<dbReference type="EMDB" id="EMD-11397"/>
<dbReference type="EMDB" id="EMD-11641"/>
<dbReference type="EMDB" id="EMD-11642"/>
<dbReference type="EMDB" id="EMD-11643"/>
<dbReference type="EMDB" id="EMD-11644"/>
<dbReference type="EMDB" id="EMD-11645"/>
<dbReference type="EMDB" id="EMD-11646"/>
<dbReference type="EMDB" id="EMD-12763"/>
<dbReference type="EMDB" id="EMD-12764"/>
<dbReference type="EMDB" id="EMD-12845"/>
<dbReference type="EMDB" id="EMD-12846"/>
<dbReference type="EMDB" id="EMD-12847"/>
<dbReference type="EMDB" id="EMD-12865"/>
<dbReference type="EMDB" id="EMD-12867"/>
<dbReference type="EMDB" id="EMD-12868"/>
<dbReference type="EMDB" id="EMD-12869"/>
<dbReference type="EMDB" id="EMD-12870"/>
<dbReference type="EMDB" id="EMD-12871"/>
<dbReference type="EMDB" id="EMD-12872"/>
<dbReference type="EMDB" id="EMD-12877"/>
<dbReference type="EMDB" id="EMD-12919"/>
<dbReference type="EMDB" id="EMD-12920"/>
<dbReference type="EMDB" id="EMD-12921"/>
<dbReference type="EMDB" id="EMD-12922"/>
<dbReference type="EMDB" id="EMD-12923"/>
<dbReference type="EMDB" id="EMD-12924"/>
<dbReference type="EMDB" id="EMD-12925"/>
<dbReference type="EMDB" id="EMD-12926"/>
<dbReference type="EMDB" id="EMD-12927"/>
<dbReference type="EMDB" id="EMD-13329"/>
<dbReference type="EMDB" id="EMD-13562"/>
<dbReference type="EMDB" id="EMD-13965"/>
<dbReference type="EMDB" id="EMD-13967"/>
<dbReference type="EMDB" id="EMD-13980"/>
<dbReference type="EMDB" id="EMD-13981"/>
<dbReference type="EMDB" id="EMD-13982"/>
<dbReference type="EMDB" id="EMD-15544"/>
<dbReference type="EMDB" id="EMD-16897"/>
<dbReference type="EMDB" id="EMD-16899"/>
<dbReference type="EMDB" id="EMD-17719"/>
<dbReference type="EMDB" id="EMD-19460"/>
<dbReference type="EMDB" id="EMD-21233"/>
<dbReference type="EMDB" id="EMD-21242"/>
<dbReference type="EMDB" id="EMD-23096"/>
<dbReference type="EMDB" id="EMD-23121"/>
<dbReference type="EMDB" id="EMD-36836"/>
<dbReference type="EMDB" id="EMD-36837"/>
<dbReference type="EMDB" id="EMD-3842"/>
<dbReference type="EMDB" id="EMD-3843"/>
<dbReference type="EMDB" id="EMD-38632"/>
<dbReference type="EMDB" id="EMD-38633"/>
<dbReference type="EMDB" id="EMD-38634"/>
<dbReference type="EMDB" id="EMD-38635"/>
<dbReference type="EMDB" id="EMD-4434"/>
<dbReference type="SMR" id="Q9BYD1"/>
<dbReference type="BioGRID" id="118817">
    <property type="interactions" value="240"/>
</dbReference>
<dbReference type="ComplexPortal" id="CPX-5226">
    <property type="entry name" value="39S mitochondrial large ribosomal subunit"/>
</dbReference>
<dbReference type="CORUM" id="Q9BYD1"/>
<dbReference type="FunCoup" id="Q9BYD1">
    <property type="interactions" value="1745"/>
</dbReference>
<dbReference type="IntAct" id="Q9BYD1">
    <property type="interactions" value="141"/>
</dbReference>
<dbReference type="MINT" id="Q9BYD1"/>
<dbReference type="STRING" id="9606.ENSP00000306548"/>
<dbReference type="GlyGen" id="Q9BYD1">
    <property type="glycosylation" value="1 site, 1 O-linked glycan (1 site)"/>
</dbReference>
<dbReference type="iPTMnet" id="Q9BYD1"/>
<dbReference type="PhosphoSitePlus" id="Q9BYD1"/>
<dbReference type="SwissPalm" id="Q9BYD1"/>
<dbReference type="BioMuta" id="MRPL13"/>
<dbReference type="DMDM" id="22257023"/>
<dbReference type="jPOST" id="Q9BYD1"/>
<dbReference type="MassIVE" id="Q9BYD1"/>
<dbReference type="PaxDb" id="9606-ENSP00000306548"/>
<dbReference type="PeptideAtlas" id="Q9BYD1"/>
<dbReference type="ProteomicsDB" id="79615"/>
<dbReference type="Pumba" id="Q9BYD1"/>
<dbReference type="TopDownProteomics" id="Q9BYD1"/>
<dbReference type="Antibodypedia" id="26860">
    <property type="antibodies" value="183 antibodies from 26 providers"/>
</dbReference>
<dbReference type="DNASU" id="28998"/>
<dbReference type="Ensembl" id="ENST00000306185.8">
    <property type="protein sequence ID" value="ENSP00000306548.3"/>
    <property type="gene ID" value="ENSG00000172172.8"/>
</dbReference>
<dbReference type="GeneID" id="28998"/>
<dbReference type="KEGG" id="hsa:28998"/>
<dbReference type="MANE-Select" id="ENST00000306185.8">
    <property type="protein sequence ID" value="ENSP00000306548.3"/>
    <property type="RefSeq nucleotide sequence ID" value="NM_014078.6"/>
    <property type="RefSeq protein sequence ID" value="NP_054797.2"/>
</dbReference>
<dbReference type="UCSC" id="uc003ypa.4">
    <property type="organism name" value="human"/>
</dbReference>
<dbReference type="AGR" id="HGNC:14278"/>
<dbReference type="CTD" id="28998"/>
<dbReference type="DisGeNET" id="28998"/>
<dbReference type="GeneCards" id="MRPL13"/>
<dbReference type="HGNC" id="HGNC:14278">
    <property type="gene designation" value="MRPL13"/>
</dbReference>
<dbReference type="HPA" id="ENSG00000172172">
    <property type="expression patterns" value="Low tissue specificity"/>
</dbReference>
<dbReference type="MIM" id="610200">
    <property type="type" value="gene"/>
</dbReference>
<dbReference type="neXtProt" id="NX_Q9BYD1"/>
<dbReference type="OpenTargets" id="ENSG00000172172"/>
<dbReference type="PharmGKB" id="PA30942"/>
<dbReference type="VEuPathDB" id="HostDB:ENSG00000172172"/>
<dbReference type="eggNOG" id="KOG3203">
    <property type="taxonomic scope" value="Eukaryota"/>
</dbReference>
<dbReference type="GeneTree" id="ENSGT00390000001515"/>
<dbReference type="HOGENOM" id="CLU_082184_1_3_1"/>
<dbReference type="InParanoid" id="Q9BYD1"/>
<dbReference type="OMA" id="HKPIYTP"/>
<dbReference type="OrthoDB" id="274622at2759"/>
<dbReference type="PAN-GO" id="Q9BYD1">
    <property type="GO annotations" value="5 GO annotations based on evolutionary models"/>
</dbReference>
<dbReference type="PhylomeDB" id="Q9BYD1"/>
<dbReference type="TreeFam" id="TF312914"/>
<dbReference type="PathwayCommons" id="Q9BYD1"/>
<dbReference type="Reactome" id="R-HSA-5368286">
    <property type="pathway name" value="Mitochondrial translation initiation"/>
</dbReference>
<dbReference type="Reactome" id="R-HSA-5389840">
    <property type="pathway name" value="Mitochondrial translation elongation"/>
</dbReference>
<dbReference type="Reactome" id="R-HSA-5419276">
    <property type="pathway name" value="Mitochondrial translation termination"/>
</dbReference>
<dbReference type="SignaLink" id="Q9BYD1"/>
<dbReference type="SIGNOR" id="Q9BYD1"/>
<dbReference type="BioGRID-ORCS" id="28998">
    <property type="hits" value="341 hits in 1175 CRISPR screens"/>
</dbReference>
<dbReference type="ChiTaRS" id="MRPL13">
    <property type="organism name" value="human"/>
</dbReference>
<dbReference type="GenomeRNAi" id="28998"/>
<dbReference type="Pharos" id="Q9BYD1">
    <property type="development level" value="Tbio"/>
</dbReference>
<dbReference type="PRO" id="PR:Q9BYD1"/>
<dbReference type="Proteomes" id="UP000005640">
    <property type="component" value="Chromosome 8"/>
</dbReference>
<dbReference type="RNAct" id="Q9BYD1">
    <property type="molecule type" value="protein"/>
</dbReference>
<dbReference type="Bgee" id="ENSG00000172172">
    <property type="expression patterns" value="Expressed in mucosa of transverse colon and 193 other cell types or tissues"/>
</dbReference>
<dbReference type="ExpressionAtlas" id="Q9BYD1">
    <property type="expression patterns" value="baseline and differential"/>
</dbReference>
<dbReference type="GO" id="GO:0005743">
    <property type="term" value="C:mitochondrial inner membrane"/>
    <property type="evidence" value="ECO:0000304"/>
    <property type="project" value="Reactome"/>
</dbReference>
<dbReference type="GO" id="GO:0005762">
    <property type="term" value="C:mitochondrial large ribosomal subunit"/>
    <property type="evidence" value="ECO:0000314"/>
    <property type="project" value="UniProtKB"/>
</dbReference>
<dbReference type="GO" id="GO:0005761">
    <property type="term" value="C:mitochondrial ribosome"/>
    <property type="evidence" value="ECO:0000314"/>
    <property type="project" value="UniProtKB"/>
</dbReference>
<dbReference type="GO" id="GO:0005739">
    <property type="term" value="C:mitochondrion"/>
    <property type="evidence" value="ECO:0000314"/>
    <property type="project" value="UniProtKB"/>
</dbReference>
<dbReference type="GO" id="GO:0005840">
    <property type="term" value="C:ribosome"/>
    <property type="evidence" value="ECO:0000318"/>
    <property type="project" value="GO_Central"/>
</dbReference>
<dbReference type="GO" id="GO:0003729">
    <property type="term" value="F:mRNA binding"/>
    <property type="evidence" value="ECO:0000318"/>
    <property type="project" value="GO_Central"/>
</dbReference>
<dbReference type="GO" id="GO:0003723">
    <property type="term" value="F:RNA binding"/>
    <property type="evidence" value="ECO:0007005"/>
    <property type="project" value="UniProtKB"/>
</dbReference>
<dbReference type="GO" id="GO:0003735">
    <property type="term" value="F:structural constituent of ribosome"/>
    <property type="evidence" value="ECO:0000318"/>
    <property type="project" value="GO_Central"/>
</dbReference>
<dbReference type="GO" id="GO:0032543">
    <property type="term" value="P:mitochondrial translation"/>
    <property type="evidence" value="ECO:0000303"/>
    <property type="project" value="ComplexPortal"/>
</dbReference>
<dbReference type="GO" id="GO:0017148">
    <property type="term" value="P:negative regulation of translation"/>
    <property type="evidence" value="ECO:0000318"/>
    <property type="project" value="GO_Central"/>
</dbReference>
<dbReference type="GO" id="GO:0006412">
    <property type="term" value="P:translation"/>
    <property type="evidence" value="ECO:0000303"/>
    <property type="project" value="UniProtKB"/>
</dbReference>
<dbReference type="CDD" id="cd00392">
    <property type="entry name" value="Ribosomal_L13"/>
    <property type="match status" value="1"/>
</dbReference>
<dbReference type="FunFam" id="3.90.1180.10:FF:000030">
    <property type="entry name" value="39S ribosomal protein L13, mitochondrial"/>
    <property type="match status" value="1"/>
</dbReference>
<dbReference type="Gene3D" id="3.90.1180.10">
    <property type="entry name" value="Ribosomal protein L13"/>
    <property type="match status" value="1"/>
</dbReference>
<dbReference type="HAMAP" id="MF_01366">
    <property type="entry name" value="Ribosomal_uL13"/>
    <property type="match status" value="1"/>
</dbReference>
<dbReference type="InterPro" id="IPR005822">
    <property type="entry name" value="Ribosomal_uL13"/>
</dbReference>
<dbReference type="InterPro" id="IPR005823">
    <property type="entry name" value="Ribosomal_uL13_bac-type"/>
</dbReference>
<dbReference type="InterPro" id="IPR023563">
    <property type="entry name" value="Ribosomal_uL13_CS"/>
</dbReference>
<dbReference type="InterPro" id="IPR036899">
    <property type="entry name" value="Ribosomal_uL13_sf"/>
</dbReference>
<dbReference type="NCBIfam" id="TIGR01066">
    <property type="entry name" value="rplM_bact"/>
    <property type="match status" value="1"/>
</dbReference>
<dbReference type="PANTHER" id="PTHR11545:SF2">
    <property type="entry name" value="LARGE RIBOSOMAL SUBUNIT PROTEIN UL13M"/>
    <property type="match status" value="1"/>
</dbReference>
<dbReference type="PANTHER" id="PTHR11545">
    <property type="entry name" value="RIBOSOMAL PROTEIN L13"/>
    <property type="match status" value="1"/>
</dbReference>
<dbReference type="Pfam" id="PF00572">
    <property type="entry name" value="Ribosomal_L13"/>
    <property type="match status" value="1"/>
</dbReference>
<dbReference type="PIRSF" id="PIRSF002181">
    <property type="entry name" value="Ribosomal_L13"/>
    <property type="match status" value="1"/>
</dbReference>
<dbReference type="SUPFAM" id="SSF52161">
    <property type="entry name" value="Ribosomal protein L13"/>
    <property type="match status" value="1"/>
</dbReference>
<dbReference type="PROSITE" id="PS00783">
    <property type="entry name" value="RIBOSOMAL_L13"/>
    <property type="match status" value="1"/>
</dbReference>
<sequence length="178" mass="20692">MSSFSRAPQQWATFARIWYLLDGKMQPPGKLAAMASIRLQGLHKPVYHALSDCGDHVVIMNTRHIAFSGNKWEQKVYSSHTGYPGGFRQVTAAQLHLRDPVAIVKLAIYGMLPKNLHRRTMMERLHLFPDEYIPEDILKNLVEELPQPRKIPKRLDEYTQEEIDAFPRLWTPPEDYRL</sequence>
<feature type="initiator methionine" description="Removed" evidence="14">
    <location>
        <position position="1"/>
    </location>
</feature>
<feature type="chain" id="PRO_0000133793" description="Large ribosomal subunit protein uL13m">
    <location>
        <begin position="2"/>
        <end position="178"/>
    </location>
</feature>
<feature type="modified residue" description="N-acetylserine" evidence="14">
    <location>
        <position position="2"/>
    </location>
</feature>
<feature type="helix" evidence="15">
    <location>
        <begin position="6"/>
        <end position="14"/>
    </location>
</feature>
<feature type="strand" evidence="15">
    <location>
        <begin position="18"/>
        <end position="22"/>
    </location>
</feature>
<feature type="helix" evidence="15">
    <location>
        <begin position="28"/>
        <end position="40"/>
    </location>
</feature>
<feature type="turn" evidence="15">
    <location>
        <begin position="41"/>
        <end position="43"/>
    </location>
</feature>
<feature type="turn" evidence="15">
    <location>
        <begin position="49"/>
        <end position="52"/>
    </location>
</feature>
<feature type="strand" evidence="15">
    <location>
        <begin position="56"/>
        <end position="60"/>
    </location>
</feature>
<feature type="helix" evidence="15">
    <location>
        <begin position="62"/>
        <end position="64"/>
    </location>
</feature>
<feature type="strand" evidence="15">
    <location>
        <begin position="66"/>
        <end position="68"/>
    </location>
</feature>
<feature type="helix" evidence="15">
    <location>
        <begin position="71"/>
        <end position="74"/>
    </location>
</feature>
<feature type="strand" evidence="15">
    <location>
        <begin position="76"/>
        <end position="80"/>
    </location>
</feature>
<feature type="strand" evidence="15">
    <location>
        <begin position="87"/>
        <end position="91"/>
    </location>
</feature>
<feature type="helix" evidence="15">
    <location>
        <begin position="92"/>
        <end position="98"/>
    </location>
</feature>
<feature type="helix" evidence="15">
    <location>
        <begin position="102"/>
        <end position="111"/>
    </location>
</feature>
<feature type="helix" evidence="15">
    <location>
        <begin position="118"/>
        <end position="123"/>
    </location>
</feature>
<feature type="strand" evidence="15">
    <location>
        <begin position="125"/>
        <end position="127"/>
    </location>
</feature>
<feature type="strand" evidence="15">
    <location>
        <begin position="129"/>
        <end position="131"/>
    </location>
</feature>
<feature type="helix" evidence="15">
    <location>
        <begin position="135"/>
        <end position="140"/>
    </location>
</feature>
<feature type="strand" evidence="17">
    <location>
        <begin position="141"/>
        <end position="144"/>
    </location>
</feature>
<feature type="turn" evidence="15">
    <location>
        <begin position="155"/>
        <end position="157"/>
    </location>
</feature>
<feature type="helix" evidence="15">
    <location>
        <begin position="160"/>
        <end position="165"/>
    </location>
</feature>
<feature type="strand" evidence="16">
    <location>
        <begin position="174"/>
        <end position="176"/>
    </location>
</feature>
<accession>Q9BYD1</accession>
<accession>B2R4R8</accession>
<accession>Q9UI04</accession>
<gene>
    <name type="primary">MRPL13</name>
</gene>
<protein>
    <recommendedName>
        <fullName evidence="6">Large ribosomal subunit protein uL13m</fullName>
    </recommendedName>
    <alternativeName>
        <fullName>39S ribosomal protein L13, mitochondrial</fullName>
        <shortName>L13mt</shortName>
        <shortName>MRP-L13</shortName>
    </alternativeName>
</protein>
<name>RM13_HUMAN</name>
<reference key="1">
    <citation type="journal article" date="2001" name="J. Biol. Chem.">
        <title>Structural compensation for the deficit of rRNA with proteins in the mammalian mitochondrial ribosome. Systematic analysis of protein components of the large ribosomal subunit from mammalian mitochondria.</title>
        <authorList>
            <person name="Suzuki T."/>
            <person name="Terasaki M."/>
            <person name="Takemoto-Hori C."/>
            <person name="Hanada T."/>
            <person name="Ueda T."/>
            <person name="Wada A."/>
            <person name="Watanabe K."/>
        </authorList>
    </citation>
    <scope>NUCLEOTIDE SEQUENCE [MRNA]</scope>
</reference>
<reference key="2">
    <citation type="submission" date="1998-12" db="EMBL/GenBank/DDBJ databases">
        <title>A novel gene expressed in human adrenal gland.</title>
        <authorList>
            <person name="Ren S."/>
            <person name="Jiang C."/>
            <person name="Huang C."/>
            <person name="Li Y."/>
            <person name="Lin W."/>
            <person name="Zhou J."/>
            <person name="Yu Y."/>
            <person name="Xu S."/>
            <person name="Wang Y."/>
            <person name="Han Z."/>
            <person name="Chen Z."/>
            <person name="Fu G."/>
        </authorList>
    </citation>
    <scope>NUCLEOTIDE SEQUENCE [MRNA]</scope>
    <source>
        <tissue>Adrenal gland</tissue>
    </source>
</reference>
<reference key="3">
    <citation type="journal article" date="2004" name="Nat. Genet.">
        <title>Complete sequencing and characterization of 21,243 full-length human cDNAs.</title>
        <authorList>
            <person name="Ota T."/>
            <person name="Suzuki Y."/>
            <person name="Nishikawa T."/>
            <person name="Otsuki T."/>
            <person name="Sugiyama T."/>
            <person name="Irie R."/>
            <person name="Wakamatsu A."/>
            <person name="Hayashi K."/>
            <person name="Sato H."/>
            <person name="Nagai K."/>
            <person name="Kimura K."/>
            <person name="Makita H."/>
            <person name="Sekine M."/>
            <person name="Obayashi M."/>
            <person name="Nishi T."/>
            <person name="Shibahara T."/>
            <person name="Tanaka T."/>
            <person name="Ishii S."/>
            <person name="Yamamoto J."/>
            <person name="Saito K."/>
            <person name="Kawai Y."/>
            <person name="Isono Y."/>
            <person name="Nakamura Y."/>
            <person name="Nagahari K."/>
            <person name="Murakami K."/>
            <person name="Yasuda T."/>
            <person name="Iwayanagi T."/>
            <person name="Wagatsuma M."/>
            <person name="Shiratori A."/>
            <person name="Sudo H."/>
            <person name="Hosoiri T."/>
            <person name="Kaku Y."/>
            <person name="Kodaira H."/>
            <person name="Kondo H."/>
            <person name="Sugawara M."/>
            <person name="Takahashi M."/>
            <person name="Kanda K."/>
            <person name="Yokoi T."/>
            <person name="Furuya T."/>
            <person name="Kikkawa E."/>
            <person name="Omura Y."/>
            <person name="Abe K."/>
            <person name="Kamihara K."/>
            <person name="Katsuta N."/>
            <person name="Sato K."/>
            <person name="Tanikawa M."/>
            <person name="Yamazaki M."/>
            <person name="Ninomiya K."/>
            <person name="Ishibashi T."/>
            <person name="Yamashita H."/>
            <person name="Murakawa K."/>
            <person name="Fujimori K."/>
            <person name="Tanai H."/>
            <person name="Kimata M."/>
            <person name="Watanabe M."/>
            <person name="Hiraoka S."/>
            <person name="Chiba Y."/>
            <person name="Ishida S."/>
            <person name="Ono Y."/>
            <person name="Takiguchi S."/>
            <person name="Watanabe S."/>
            <person name="Yosida M."/>
            <person name="Hotuta T."/>
            <person name="Kusano J."/>
            <person name="Kanehori K."/>
            <person name="Takahashi-Fujii A."/>
            <person name="Hara H."/>
            <person name="Tanase T.-O."/>
            <person name="Nomura Y."/>
            <person name="Togiya S."/>
            <person name="Komai F."/>
            <person name="Hara R."/>
            <person name="Takeuchi K."/>
            <person name="Arita M."/>
            <person name="Imose N."/>
            <person name="Musashino K."/>
            <person name="Yuuki H."/>
            <person name="Oshima A."/>
            <person name="Sasaki N."/>
            <person name="Aotsuka S."/>
            <person name="Yoshikawa Y."/>
            <person name="Matsunawa H."/>
            <person name="Ichihara T."/>
            <person name="Shiohata N."/>
            <person name="Sano S."/>
            <person name="Moriya S."/>
            <person name="Momiyama H."/>
            <person name="Satoh N."/>
            <person name="Takami S."/>
            <person name="Terashima Y."/>
            <person name="Suzuki O."/>
            <person name="Nakagawa S."/>
            <person name="Senoh A."/>
            <person name="Mizoguchi H."/>
            <person name="Goto Y."/>
            <person name="Shimizu F."/>
            <person name="Wakebe H."/>
            <person name="Hishigaki H."/>
            <person name="Watanabe T."/>
            <person name="Sugiyama A."/>
            <person name="Takemoto M."/>
            <person name="Kawakami B."/>
            <person name="Yamazaki M."/>
            <person name="Watanabe K."/>
            <person name="Kumagai A."/>
            <person name="Itakura S."/>
            <person name="Fukuzumi Y."/>
            <person name="Fujimori Y."/>
            <person name="Komiyama M."/>
            <person name="Tashiro H."/>
            <person name="Tanigami A."/>
            <person name="Fujiwara T."/>
            <person name="Ono T."/>
            <person name="Yamada K."/>
            <person name="Fujii Y."/>
            <person name="Ozaki K."/>
            <person name="Hirao M."/>
            <person name="Ohmori Y."/>
            <person name="Kawabata A."/>
            <person name="Hikiji T."/>
            <person name="Kobatake N."/>
            <person name="Inagaki H."/>
            <person name="Ikema Y."/>
            <person name="Okamoto S."/>
            <person name="Okitani R."/>
            <person name="Kawakami T."/>
            <person name="Noguchi S."/>
            <person name="Itoh T."/>
            <person name="Shigeta K."/>
            <person name="Senba T."/>
            <person name="Matsumura K."/>
            <person name="Nakajima Y."/>
            <person name="Mizuno T."/>
            <person name="Morinaga M."/>
            <person name="Sasaki M."/>
            <person name="Togashi T."/>
            <person name="Oyama M."/>
            <person name="Hata H."/>
            <person name="Watanabe M."/>
            <person name="Komatsu T."/>
            <person name="Mizushima-Sugano J."/>
            <person name="Satoh T."/>
            <person name="Shirai Y."/>
            <person name="Takahashi Y."/>
            <person name="Nakagawa K."/>
            <person name="Okumura K."/>
            <person name="Nagase T."/>
            <person name="Nomura N."/>
            <person name="Kikuchi H."/>
            <person name="Masuho Y."/>
            <person name="Yamashita R."/>
            <person name="Nakai K."/>
            <person name="Yada T."/>
            <person name="Nakamura Y."/>
            <person name="Ohara O."/>
            <person name="Isogai T."/>
            <person name="Sugano S."/>
        </authorList>
    </citation>
    <scope>NUCLEOTIDE SEQUENCE [LARGE SCALE MRNA]</scope>
    <source>
        <tissue>Cerebellum</tissue>
    </source>
</reference>
<reference key="4">
    <citation type="submission" date="2005-07" db="EMBL/GenBank/DDBJ databases">
        <authorList>
            <person name="Mural R.J."/>
            <person name="Istrail S."/>
            <person name="Sutton G.G."/>
            <person name="Florea L."/>
            <person name="Halpern A.L."/>
            <person name="Mobarry C.M."/>
            <person name="Lippert R."/>
            <person name="Walenz B."/>
            <person name="Shatkay H."/>
            <person name="Dew I."/>
            <person name="Miller J.R."/>
            <person name="Flanigan M.J."/>
            <person name="Edwards N.J."/>
            <person name="Bolanos R."/>
            <person name="Fasulo D."/>
            <person name="Halldorsson B.V."/>
            <person name="Hannenhalli S."/>
            <person name="Turner R."/>
            <person name="Yooseph S."/>
            <person name="Lu F."/>
            <person name="Nusskern D.R."/>
            <person name="Shue B.C."/>
            <person name="Zheng X.H."/>
            <person name="Zhong F."/>
            <person name="Delcher A.L."/>
            <person name="Huson D.H."/>
            <person name="Kravitz S.A."/>
            <person name="Mouchard L."/>
            <person name="Reinert K."/>
            <person name="Remington K.A."/>
            <person name="Clark A.G."/>
            <person name="Waterman M.S."/>
            <person name="Eichler E.E."/>
            <person name="Adams M.D."/>
            <person name="Hunkapiller M.W."/>
            <person name="Myers E.W."/>
            <person name="Venter J.C."/>
        </authorList>
    </citation>
    <scope>NUCLEOTIDE SEQUENCE [LARGE SCALE GENOMIC DNA]</scope>
</reference>
<reference key="5">
    <citation type="journal article" date="2004" name="Genome Res.">
        <title>The status, quality, and expansion of the NIH full-length cDNA project: the Mammalian Gene Collection (MGC).</title>
        <authorList>
            <consortium name="The MGC Project Team"/>
        </authorList>
    </citation>
    <scope>NUCLEOTIDE SEQUENCE [LARGE SCALE MRNA]</scope>
    <source>
        <tissue>Brain</tissue>
        <tissue>Placenta</tissue>
    </source>
</reference>
<reference key="6">
    <citation type="journal article" date="2011" name="BMC Syst. Biol.">
        <title>Initial characterization of the human central proteome.</title>
        <authorList>
            <person name="Burkard T.R."/>
            <person name="Planyavsky M."/>
            <person name="Kaupe I."/>
            <person name="Breitwieser F.P."/>
            <person name="Buerckstuemmer T."/>
            <person name="Bennett K.L."/>
            <person name="Superti-Furga G."/>
            <person name="Colinge J."/>
        </authorList>
    </citation>
    <scope>IDENTIFICATION BY MASS SPECTROMETRY [LARGE SCALE ANALYSIS]</scope>
</reference>
<reference key="7">
    <citation type="journal article" date="2015" name="Proteomics">
        <title>N-terminome analysis of the human mitochondrial proteome.</title>
        <authorList>
            <person name="Vaca Jacome A.S."/>
            <person name="Rabilloud T."/>
            <person name="Schaeffer-Reiss C."/>
            <person name="Rompais M."/>
            <person name="Ayoub D."/>
            <person name="Lane L."/>
            <person name="Bairoch A."/>
            <person name="Van Dorsselaer A."/>
            <person name="Carapito C."/>
        </authorList>
    </citation>
    <scope>ACETYLATION [LARGE SCALE ANALYSIS] AT SER-2</scope>
    <scope>CLEAVAGE OF INITIATOR METHIONINE [LARGE SCALE ANALYSIS]</scope>
    <scope>IDENTIFICATION BY MASS SPECTROMETRY [LARGE SCALE ANALYSIS]</scope>
</reference>
<reference evidence="8" key="8">
    <citation type="journal article" date="2014" name="Science">
        <title>Structure of the large ribosomal subunit from human mitochondria.</title>
        <authorList>
            <person name="Brown A."/>
            <person name="Amunts A."/>
            <person name="Bai X.C."/>
            <person name="Sugimoto Y."/>
            <person name="Edwards P.C."/>
            <person name="Murshudov G."/>
            <person name="Scheres S.H."/>
            <person name="Ramakrishnan V."/>
        </authorList>
    </citation>
    <scope>STRUCTURE BY ELECTRON MICROSCOPY (3.40 ANGSTROMS)</scope>
    <scope>SUBCELLULAR LOCATION</scope>
    <scope>SUBUNIT</scope>
</reference>
<reference evidence="9" key="9">
    <citation type="journal article" date="2015" name="Science">
        <title>Ribosome. The structure of the human mitochondrial ribosome.</title>
        <authorList>
            <person name="Amunts A."/>
            <person name="Brown A."/>
            <person name="Toots J."/>
            <person name="Scheres S.H."/>
            <person name="Ramakrishnan V."/>
        </authorList>
    </citation>
    <scope>STRUCTURE BY ELECTRON MICROSCOPY (3.50 ANGSTROMS)</scope>
    <scope>SUBCELLULAR LOCATION</scope>
    <scope>SUBUNIT</scope>
</reference>
<reference evidence="10 11" key="10">
    <citation type="journal article" date="2017" name="Nat. Struct. Mol. Biol.">
        <title>Structures of the human mitochondrial ribosome in native states of assembly.</title>
        <authorList>
            <person name="Brown A."/>
            <person name="Rathore S."/>
            <person name="Kimanius D."/>
            <person name="Aibara S."/>
            <person name="Bai X.C."/>
            <person name="Rorbach J."/>
            <person name="Amunts A."/>
            <person name="Ramakrishnan V."/>
        </authorList>
    </citation>
    <scope>STRUCTURE BY ELECTRON MICROSCOPY (3.03 ANGSTROMS)</scope>
    <scope>SUBCELLULAR LOCATION</scope>
    <scope>SUBUNIT</scope>
</reference>
<reference evidence="12 13" key="11">
    <citation type="journal article" date="2022" name="Nat. Commun.">
        <title>A late-stage assembly checkpoint of the human mitochondrial ribosome large subunit.</title>
        <authorList>
            <person name="Rebelo-Guiomar P."/>
            <person name="Pellegrino S."/>
            <person name="Dent K.C."/>
            <person name="Sas-Chen A."/>
            <person name="Miller-Fleming L."/>
            <person name="Garone C."/>
            <person name="Van Haute L."/>
            <person name="Rogan J.F."/>
            <person name="Dinan A."/>
            <person name="Firth A.E."/>
            <person name="Andrews B."/>
            <person name="Whitworth A.J."/>
            <person name="Schwartz S."/>
            <person name="Warren A.J."/>
            <person name="Minczuk M."/>
        </authorList>
    </citation>
    <scope>STRUCTURE BY ELECTRON MICROSCOPY (2.9 ANGSTROMS) IN COMPLEX WITH MTLSU</scope>
    <scope>SUBUNIT</scope>
</reference>
<organism>
    <name type="scientific">Homo sapiens</name>
    <name type="common">Human</name>
    <dbReference type="NCBI Taxonomy" id="9606"/>
    <lineage>
        <taxon>Eukaryota</taxon>
        <taxon>Metazoa</taxon>
        <taxon>Chordata</taxon>
        <taxon>Craniata</taxon>
        <taxon>Vertebrata</taxon>
        <taxon>Euteleostomi</taxon>
        <taxon>Mammalia</taxon>
        <taxon>Eutheria</taxon>
        <taxon>Euarchontoglires</taxon>
        <taxon>Primates</taxon>
        <taxon>Haplorrhini</taxon>
        <taxon>Catarrhini</taxon>
        <taxon>Hominidae</taxon>
        <taxon>Homo</taxon>
    </lineage>
</organism>
<comment type="subunit">
    <text evidence="1 2 3 4 5">Component of the mitochondrial large ribosomal subunit (mt-LSU) (PubMed:25278503, PubMed:25838379, PubMed:28892042, PubMed:35177605). Mature mammalian 55S mitochondrial ribosomes consist of a small (28S) and a large (39S) subunit. The 28S small subunit contains a 12S ribosomal RNA (12S mt-rRNA) and 30 different proteins. The 39S large subunit contains a 16S rRNA (16S mt-rRNA), a copy of mitochondrial valine transfer RNA (mt-tRNA(Val)), which plays an integral structural role, and 52 different proteins (PubMed:25278503, PubMed:25838379). Interacts with OXA1L (By similarity).</text>
</comment>
<comment type="interaction">
    <interactant intactId="EBI-1054936">
        <id>Q9BYD1</id>
    </interactant>
    <interactant intactId="EBI-466029">
        <id>P42858</id>
        <label>HTT</label>
    </interactant>
    <organismsDiffer>false</organismsDiffer>
    <experiments>3</experiments>
</comment>
<comment type="subcellular location">
    <subcellularLocation>
        <location evidence="2 3 4">Mitochondrion</location>
    </subcellularLocation>
</comment>
<comment type="similarity">
    <text evidence="7">Belongs to the universal ribosomal protein uL13 family.</text>
</comment>
<comment type="sequence caution" evidence="7">
    <conflict type="frameshift">
        <sequence resource="EMBL-CDS" id="AAF17202"/>
    </conflict>
</comment>
<proteinExistence type="evidence at protein level"/>